<name>RL24_OENOB</name>
<feature type="chain" id="PRO_1000052269" description="Large ribosomal subunit protein uL24">
    <location>
        <begin position="1"/>
        <end position="89"/>
    </location>
</feature>
<organism>
    <name type="scientific">Oenococcus oeni (strain ATCC BAA-331 / PSU-1)</name>
    <dbReference type="NCBI Taxonomy" id="203123"/>
    <lineage>
        <taxon>Bacteria</taxon>
        <taxon>Bacillati</taxon>
        <taxon>Bacillota</taxon>
        <taxon>Bacilli</taxon>
        <taxon>Lactobacillales</taxon>
        <taxon>Lactobacillaceae</taxon>
        <taxon>Oenococcus</taxon>
    </lineage>
</organism>
<keyword id="KW-1185">Reference proteome</keyword>
<keyword id="KW-0687">Ribonucleoprotein</keyword>
<keyword id="KW-0689">Ribosomal protein</keyword>
<keyword id="KW-0694">RNA-binding</keyword>
<keyword id="KW-0699">rRNA-binding</keyword>
<comment type="function">
    <text evidence="1">One of two assembly initiator proteins, it binds directly to the 5'-end of the 23S rRNA, where it nucleates assembly of the 50S subunit.</text>
</comment>
<comment type="function">
    <text evidence="1">One of the proteins that surrounds the polypeptide exit tunnel on the outside of the subunit.</text>
</comment>
<comment type="subunit">
    <text evidence="1">Part of the 50S ribosomal subunit.</text>
</comment>
<comment type="similarity">
    <text evidence="1">Belongs to the universal ribosomal protein uL24 family.</text>
</comment>
<accession>Q04G74</accession>
<reference key="1">
    <citation type="journal article" date="2006" name="Proc. Natl. Acad. Sci. U.S.A.">
        <title>Comparative genomics of the lactic acid bacteria.</title>
        <authorList>
            <person name="Makarova K.S."/>
            <person name="Slesarev A."/>
            <person name="Wolf Y.I."/>
            <person name="Sorokin A."/>
            <person name="Mirkin B."/>
            <person name="Koonin E.V."/>
            <person name="Pavlov A."/>
            <person name="Pavlova N."/>
            <person name="Karamychev V."/>
            <person name="Polouchine N."/>
            <person name="Shakhova V."/>
            <person name="Grigoriev I."/>
            <person name="Lou Y."/>
            <person name="Rohksar D."/>
            <person name="Lucas S."/>
            <person name="Huang K."/>
            <person name="Goodstein D.M."/>
            <person name="Hawkins T."/>
            <person name="Plengvidhya V."/>
            <person name="Welker D."/>
            <person name="Hughes J."/>
            <person name="Goh Y."/>
            <person name="Benson A."/>
            <person name="Baldwin K."/>
            <person name="Lee J.-H."/>
            <person name="Diaz-Muniz I."/>
            <person name="Dosti B."/>
            <person name="Smeianov V."/>
            <person name="Wechter W."/>
            <person name="Barabote R."/>
            <person name="Lorca G."/>
            <person name="Altermann E."/>
            <person name="Barrangou R."/>
            <person name="Ganesan B."/>
            <person name="Xie Y."/>
            <person name="Rawsthorne H."/>
            <person name="Tamir D."/>
            <person name="Parker C."/>
            <person name="Breidt F."/>
            <person name="Broadbent J.R."/>
            <person name="Hutkins R."/>
            <person name="O'Sullivan D."/>
            <person name="Steele J."/>
            <person name="Unlu G."/>
            <person name="Saier M.H. Jr."/>
            <person name="Klaenhammer T."/>
            <person name="Richardson P."/>
            <person name="Kozyavkin S."/>
            <person name="Weimer B.C."/>
            <person name="Mills D.A."/>
        </authorList>
    </citation>
    <scope>NUCLEOTIDE SEQUENCE [LARGE SCALE GENOMIC DNA]</scope>
    <source>
        <strain>ATCC BAA-331 / PSU-1</strain>
    </source>
</reference>
<protein>
    <recommendedName>
        <fullName evidence="1">Large ribosomal subunit protein uL24</fullName>
    </recommendedName>
    <alternativeName>
        <fullName evidence="2">50S ribosomal protein L24</fullName>
    </alternativeName>
</protein>
<gene>
    <name evidence="1" type="primary">rplX</name>
    <name type="ordered locus">OEOE_0606</name>
</gene>
<proteinExistence type="inferred from homology"/>
<dbReference type="EMBL" id="CP000411">
    <property type="protein sequence ID" value="ABJ56548.1"/>
    <property type="molecule type" value="Genomic_DNA"/>
</dbReference>
<dbReference type="RefSeq" id="WP_002816348.1">
    <property type="nucleotide sequence ID" value="NC_008528.1"/>
</dbReference>
<dbReference type="SMR" id="Q04G74"/>
<dbReference type="STRING" id="203123.OEOE_0606"/>
<dbReference type="GeneID" id="75065428"/>
<dbReference type="KEGG" id="ooe:OEOE_0606"/>
<dbReference type="eggNOG" id="COG0198">
    <property type="taxonomic scope" value="Bacteria"/>
</dbReference>
<dbReference type="HOGENOM" id="CLU_093315_2_2_9"/>
<dbReference type="Proteomes" id="UP000000774">
    <property type="component" value="Chromosome"/>
</dbReference>
<dbReference type="GO" id="GO:1990904">
    <property type="term" value="C:ribonucleoprotein complex"/>
    <property type="evidence" value="ECO:0007669"/>
    <property type="project" value="UniProtKB-KW"/>
</dbReference>
<dbReference type="GO" id="GO:0005840">
    <property type="term" value="C:ribosome"/>
    <property type="evidence" value="ECO:0007669"/>
    <property type="project" value="UniProtKB-KW"/>
</dbReference>
<dbReference type="GO" id="GO:0019843">
    <property type="term" value="F:rRNA binding"/>
    <property type="evidence" value="ECO:0007669"/>
    <property type="project" value="UniProtKB-UniRule"/>
</dbReference>
<dbReference type="GO" id="GO:0003735">
    <property type="term" value="F:structural constituent of ribosome"/>
    <property type="evidence" value="ECO:0007669"/>
    <property type="project" value="InterPro"/>
</dbReference>
<dbReference type="GO" id="GO:0006412">
    <property type="term" value="P:translation"/>
    <property type="evidence" value="ECO:0007669"/>
    <property type="project" value="UniProtKB-UniRule"/>
</dbReference>
<dbReference type="CDD" id="cd06089">
    <property type="entry name" value="KOW_RPL26"/>
    <property type="match status" value="1"/>
</dbReference>
<dbReference type="Gene3D" id="2.30.30.30">
    <property type="match status" value="1"/>
</dbReference>
<dbReference type="HAMAP" id="MF_01326_B">
    <property type="entry name" value="Ribosomal_uL24_B"/>
    <property type="match status" value="1"/>
</dbReference>
<dbReference type="InterPro" id="IPR005824">
    <property type="entry name" value="KOW"/>
</dbReference>
<dbReference type="InterPro" id="IPR014722">
    <property type="entry name" value="Rib_uL2_dom2"/>
</dbReference>
<dbReference type="InterPro" id="IPR003256">
    <property type="entry name" value="Ribosomal_uL24"/>
</dbReference>
<dbReference type="InterPro" id="IPR005825">
    <property type="entry name" value="Ribosomal_uL24_CS"/>
</dbReference>
<dbReference type="InterPro" id="IPR041988">
    <property type="entry name" value="Ribosomal_uL24_KOW"/>
</dbReference>
<dbReference type="InterPro" id="IPR008991">
    <property type="entry name" value="Translation_prot_SH3-like_sf"/>
</dbReference>
<dbReference type="NCBIfam" id="TIGR01079">
    <property type="entry name" value="rplX_bact"/>
    <property type="match status" value="1"/>
</dbReference>
<dbReference type="PANTHER" id="PTHR12903">
    <property type="entry name" value="MITOCHONDRIAL RIBOSOMAL PROTEIN L24"/>
    <property type="match status" value="1"/>
</dbReference>
<dbReference type="Pfam" id="PF00467">
    <property type="entry name" value="KOW"/>
    <property type="match status" value="1"/>
</dbReference>
<dbReference type="Pfam" id="PF17136">
    <property type="entry name" value="ribosomal_L24"/>
    <property type="match status" value="1"/>
</dbReference>
<dbReference type="SMART" id="SM00739">
    <property type="entry name" value="KOW"/>
    <property type="match status" value="1"/>
</dbReference>
<dbReference type="SUPFAM" id="SSF50104">
    <property type="entry name" value="Translation proteins SH3-like domain"/>
    <property type="match status" value="1"/>
</dbReference>
<dbReference type="PROSITE" id="PS01108">
    <property type="entry name" value="RIBOSOMAL_L24"/>
    <property type="match status" value="1"/>
</dbReference>
<sequence>MNIKTGDKVRVIAGKDKGKEGSVTKVFLKTDRVIVEGVNKVKKHQKPTQAEPKGGIIEKEAAIHVSNVMLLDASKKKTIRASKRESNKK</sequence>
<evidence type="ECO:0000255" key="1">
    <source>
        <dbReference type="HAMAP-Rule" id="MF_01326"/>
    </source>
</evidence>
<evidence type="ECO:0000305" key="2"/>